<comment type="function">
    <text evidence="3 5">Involved in the regulation of Pn.p cell fate determination (PubMed:12015965). Involved in zinc metabolism and the decrease of the cytosolic zinc concentration which is thought to modulate Ras signaling (PubMed:12015965). Involved in zinc transport from the intestinal lumen to the pseudocoelum (PubMed:23717214).</text>
</comment>
<comment type="subunit">
    <text evidence="4">Interacts with lin-45 in a zinc-dependent manner.</text>
</comment>
<comment type="subcellular location">
    <subcellularLocation>
        <location evidence="3 5">Basolateral cell membrane</location>
        <topology evidence="1">Multi-pass membrane protein</topology>
    </subcellularLocation>
</comment>
<comment type="alternative products">
    <event type="alternative splicing"/>
    <isoform>
        <id>Q95QW4-1</id>
        <name evidence="6">b</name>
        <sequence type="displayed"/>
    </isoform>
    <isoform>
        <id>Q95QW4-2</id>
        <name evidence="3">a</name>
        <sequence type="described" ref="VSP_052484"/>
    </isoform>
</comment>
<comment type="tissue specificity">
    <text evidence="3 5">Expressed in intestinal cells (PubMed:12015965, PubMed:23717214). Expressed in the vulva (PubMed:12015965).</text>
</comment>
<comment type="similarity">
    <text evidence="1">Belongs to the cation diffusion facilitator (CDF) transporter (TC 2.A.4) family. SLC30A subfamily.</text>
</comment>
<protein>
    <recommendedName>
        <fullName>Cation diffusion facilitator family protein 1</fullName>
    </recommendedName>
</protein>
<organism>
    <name type="scientific">Caenorhabditis elegans</name>
    <dbReference type="NCBI Taxonomy" id="6239"/>
    <lineage>
        <taxon>Eukaryota</taxon>
        <taxon>Metazoa</taxon>
        <taxon>Ecdysozoa</taxon>
        <taxon>Nematoda</taxon>
        <taxon>Chromadorea</taxon>
        <taxon>Rhabditida</taxon>
        <taxon>Rhabditina</taxon>
        <taxon>Rhabditomorpha</taxon>
        <taxon>Rhabditoidea</taxon>
        <taxon>Rhabditidae</taxon>
        <taxon>Peloderinae</taxon>
        <taxon>Caenorhabditis</taxon>
    </lineage>
</organism>
<evidence type="ECO:0000255" key="1"/>
<evidence type="ECO:0000256" key="2">
    <source>
        <dbReference type="SAM" id="MobiDB-lite"/>
    </source>
</evidence>
<evidence type="ECO:0000269" key="3">
    <source>
    </source>
</evidence>
<evidence type="ECO:0000269" key="4">
    <source>
    </source>
</evidence>
<evidence type="ECO:0000269" key="5">
    <source>
    </source>
</evidence>
<evidence type="ECO:0000269" key="6">
    <source>
    </source>
</evidence>
<evidence type="ECO:0000303" key="7">
    <source>
    </source>
</evidence>
<evidence type="ECO:0000305" key="8"/>
<accession>Q95QW4</accession>
<accession>Q18009</accession>
<proteinExistence type="evidence at protein level"/>
<name>CDF1_CAEEL</name>
<gene>
    <name type="primary">cdf-1</name>
    <name type="ORF">C15B12.7</name>
</gene>
<reference evidence="8" key="1">
    <citation type="journal article" date="2002" name="Dev. Cell">
        <title>Zinc ions and cation diffusion facilitator proteins regulate Ras-mediated signaling.</title>
        <authorList>
            <person name="Bruinsma J.J."/>
            <person name="Jirakulaporn T."/>
            <person name="Muslin A.J."/>
            <person name="Kornfeld K."/>
        </authorList>
    </citation>
    <scope>NUCLEOTIDE SEQUENCE [MRNA] (ISOFORM A)</scope>
    <scope>FUNCTION</scope>
    <scope>SUBCELLULAR LOCATION</scope>
    <scope>TISSUE SPECIFICITY</scope>
</reference>
<reference key="2">
    <citation type="journal article" date="1998" name="Science">
        <title>Genome sequence of the nematode C. elegans: a platform for investigating biology.</title>
        <authorList>
            <consortium name="The C. elegans sequencing consortium"/>
        </authorList>
    </citation>
    <scope>NUCLEOTIDE SEQUENCE [LARGE SCALE GENOMIC DNA]</scope>
    <scope>ALTERNATIVE SPLICING</scope>
    <source>
        <strain>Bristol N2</strain>
    </source>
</reference>
<reference evidence="8" key="3">
    <citation type="journal article" date="2004" name="J. Biol. Chem.">
        <title>Cation diffusion facilitator proteins modulate Raf-1 activity.</title>
        <authorList>
            <person name="Jirakulaporn T."/>
            <person name="Muslin A.J."/>
        </authorList>
    </citation>
    <scope>INTERACTION WITH LIN-45</scope>
</reference>
<reference key="4">
    <citation type="journal article" date="2013" name="PLoS Genet.">
        <title>ttm-1 encodes CDF transporters that excrete zinc from intestinal cells of C. elegans and act in a parallel negative feedback circuit that promotes homeostasis.</title>
        <authorList>
            <person name="Roh H.C."/>
            <person name="Collier S."/>
            <person name="Deshmukh K."/>
            <person name="Guthrie J."/>
            <person name="Robertson J.D."/>
            <person name="Kornfeld K."/>
        </authorList>
    </citation>
    <scope>FUNCTION</scope>
    <scope>SUBCELLULAR LOCATION</scope>
    <scope>TISSUE SPECIFICITY</scope>
    <scope>MUTAGENESIS OF 199-GLU--GLU-561</scope>
</reference>
<sequence length="561" mass="61434">MEVTMEDRSVKADKADRDDNNTTSTELLGKMRQTKVISTNQNNNHLIDRMVSIYEMEMIKSQSTETISDVSDVLEFTVIDNCSHGTHTLEHDLRLKGEPIGKSESVKGVSRSLIIQIGMTVIFCALEFITGVVCSSIAMLADSYHMAADVMALIVAFTCIKIATRPSTRLGYGWVRAETLGGFFNGIFMCTVCVLVFQEAVGRIINVHMITHPLQVLVIGFIGLLINLFGMFNLSGHGHSHGGGSHGHSHGGSHGHSHNNKKTKKNDGHGHSHANGHGHSHDGKSDCNGEEEPDHTRLNGKFRSASAMANSDANVRLLDNDDNSNDIIERRLSGVNSQNTIIATVDRQMTPYGTHMASEVLNVSSNNLDKSAQKTEQKKDKNVNIHGVWLHLLSDAFGSVIVMISAGFVYFLPTWKIAAYLDPILSISLASIMGFTAVVLVKTSGEKLLKQTPEGLDLEKVKKDLCSIVGVSKVEKLSVWTLCGQRIIAAAHVNICHPAVFPEAAYKIKNYFHDLGVHSTTIEPTFEDTCMQSMRIMVKKVVDGKSIEEPVSVSTENEITE</sequence>
<keyword id="KW-0025">Alternative splicing</keyword>
<keyword id="KW-1003">Cell membrane</keyword>
<keyword id="KW-0217">Developmental protein</keyword>
<keyword id="KW-0406">Ion transport</keyword>
<keyword id="KW-0472">Membrane</keyword>
<keyword id="KW-1185">Reference proteome</keyword>
<keyword id="KW-0677">Repeat</keyword>
<keyword id="KW-0812">Transmembrane</keyword>
<keyword id="KW-1133">Transmembrane helix</keyword>
<keyword id="KW-0813">Transport</keyword>
<keyword id="KW-0862">Zinc</keyword>
<keyword id="KW-0864">Zinc transport</keyword>
<feature type="chain" id="PRO_0000294932" description="Cation diffusion facilitator family protein 1">
    <location>
        <begin position="1"/>
        <end position="561"/>
    </location>
</feature>
<feature type="topological domain" description="Cytoplasmic" evidence="1">
    <location>
        <begin position="1"/>
        <end position="112"/>
    </location>
</feature>
<feature type="transmembrane region" description="Helical" evidence="1">
    <location>
        <begin position="113"/>
        <end position="133"/>
    </location>
</feature>
<feature type="topological domain" description="Extracellular" evidence="1">
    <location>
        <begin position="134"/>
        <end position="136"/>
    </location>
</feature>
<feature type="transmembrane region" description="Helical" evidence="1">
    <location>
        <begin position="137"/>
        <end position="157"/>
    </location>
</feature>
<feature type="topological domain" description="Cytoplasmic" evidence="1">
    <location>
        <begin position="158"/>
        <end position="176"/>
    </location>
</feature>
<feature type="transmembrane region" description="Helical" evidence="1">
    <location>
        <begin position="177"/>
        <end position="197"/>
    </location>
</feature>
<feature type="topological domain" description="Extracellular" evidence="1">
    <location>
        <begin position="198"/>
        <end position="215"/>
    </location>
</feature>
<feature type="transmembrane region" description="Helical" evidence="1">
    <location>
        <begin position="216"/>
        <end position="236"/>
    </location>
</feature>
<feature type="topological domain" description="Cytoplasmic" evidence="1">
    <location>
        <begin position="237"/>
        <end position="391"/>
    </location>
</feature>
<feature type="transmembrane region" description="Helical" evidence="1">
    <location>
        <begin position="392"/>
        <end position="412"/>
    </location>
</feature>
<feature type="topological domain" description="Extracellular" evidence="1">
    <location>
        <begin position="413"/>
        <end position="420"/>
    </location>
</feature>
<feature type="transmembrane region" description="Helical" evidence="1">
    <location>
        <begin position="421"/>
        <end position="441"/>
    </location>
</feature>
<feature type="topological domain" description="Cytoplasmic" evidence="1">
    <location>
        <begin position="442"/>
        <end position="561"/>
    </location>
</feature>
<feature type="region of interest" description="Disordered" evidence="2">
    <location>
        <begin position="1"/>
        <end position="26"/>
    </location>
</feature>
<feature type="region of interest" description="Disordered" evidence="2">
    <location>
        <begin position="240"/>
        <end position="304"/>
    </location>
</feature>
<feature type="region of interest" description="6 X 2 AA approximate repeats of H-G" evidence="1">
    <location>
        <begin position="246"/>
        <end position="270"/>
    </location>
</feature>
<feature type="compositionally biased region" description="Basic and acidic residues" evidence="2">
    <location>
        <begin position="1"/>
        <end position="20"/>
    </location>
</feature>
<feature type="compositionally biased region" description="Basic residues" evidence="2">
    <location>
        <begin position="247"/>
        <end position="264"/>
    </location>
</feature>
<feature type="splice variant" id="VSP_052484" description="In isoform a." evidence="7">
    <location>
        <begin position="38"/>
        <end position="79"/>
    </location>
</feature>
<feature type="mutagenesis site" description="In n2527; loss of zinc transport from intestinal cells to pseudocoelom." evidence="5">
    <location>
        <begin position="199"/>
        <end position="561"/>
    </location>
</feature>
<dbReference type="EMBL" id="FO080547">
    <property type="protein sequence ID" value="CCD64570.1"/>
    <property type="molecule type" value="Genomic_DNA"/>
</dbReference>
<dbReference type="EMBL" id="FO080547">
    <property type="protein sequence ID" value="CCD64571.1"/>
    <property type="molecule type" value="Genomic_DNA"/>
</dbReference>
<dbReference type="RefSeq" id="NP_509095.1">
    <property type="nucleotide sequence ID" value="NM_076694.4"/>
</dbReference>
<dbReference type="RefSeq" id="NP_509096.1">
    <property type="nucleotide sequence ID" value="NM_076695.3"/>
</dbReference>
<dbReference type="SMR" id="Q95QW4"/>
<dbReference type="BioGRID" id="45853">
    <property type="interactions" value="2"/>
</dbReference>
<dbReference type="FunCoup" id="Q95QW4">
    <property type="interactions" value="1966"/>
</dbReference>
<dbReference type="STRING" id="6239.C15B12.7b.1"/>
<dbReference type="TCDB" id="2.A.4.2.4">
    <property type="family name" value="the cation diffusion facilitator (cdf) family"/>
</dbReference>
<dbReference type="iPTMnet" id="Q95QW4"/>
<dbReference type="PaxDb" id="6239-C15B12.7b"/>
<dbReference type="PeptideAtlas" id="Q95QW4"/>
<dbReference type="EnsemblMetazoa" id="C15B12.7a.1">
    <property type="protein sequence ID" value="C15B12.7a.1"/>
    <property type="gene ID" value="WBGene00000393"/>
</dbReference>
<dbReference type="EnsemblMetazoa" id="C15B12.7a.2">
    <property type="protein sequence ID" value="C15B12.7a.2"/>
    <property type="gene ID" value="WBGene00000393"/>
</dbReference>
<dbReference type="EnsemblMetazoa" id="C15B12.7b.1">
    <property type="protein sequence ID" value="C15B12.7b.1"/>
    <property type="gene ID" value="WBGene00000393"/>
</dbReference>
<dbReference type="EnsemblMetazoa" id="C15B12.7b.2">
    <property type="protein sequence ID" value="C15B12.7b.2"/>
    <property type="gene ID" value="WBGene00000393"/>
</dbReference>
<dbReference type="GeneID" id="180923"/>
<dbReference type="KEGG" id="cel:CELE_C15B12.7"/>
<dbReference type="UCSC" id="C15B12.7b">
    <molecule id="Q95QW4-1"/>
    <property type="organism name" value="c. elegans"/>
</dbReference>
<dbReference type="AGR" id="WB:WBGene00000393"/>
<dbReference type="CTD" id="180923"/>
<dbReference type="WormBase" id="C15B12.7a">
    <molecule id="Q95QW4-2"/>
    <property type="protein sequence ID" value="CE27065"/>
    <property type="gene ID" value="WBGene00000393"/>
    <property type="gene designation" value="cdf-1"/>
</dbReference>
<dbReference type="WormBase" id="C15B12.7b">
    <molecule id="Q95QW4-1"/>
    <property type="protein sequence ID" value="CE29581"/>
    <property type="gene ID" value="WBGene00000393"/>
    <property type="gene designation" value="cdf-1"/>
</dbReference>
<dbReference type="eggNOG" id="KOG1483">
    <property type="taxonomic scope" value="Eukaryota"/>
</dbReference>
<dbReference type="GeneTree" id="ENSGT00940000171992"/>
<dbReference type="InParanoid" id="Q95QW4"/>
<dbReference type="OMA" id="IFMCTVC"/>
<dbReference type="OrthoDB" id="29444at2759"/>
<dbReference type="PhylomeDB" id="Q95QW4"/>
<dbReference type="Reactome" id="R-CEL-425410">
    <property type="pathway name" value="Metal ion SLC transporters"/>
</dbReference>
<dbReference type="Reactome" id="R-CEL-435368">
    <property type="pathway name" value="Zinc efflux and compartmentalization by the SLC30 family"/>
</dbReference>
<dbReference type="SignaLink" id="Q95QW4"/>
<dbReference type="PRO" id="PR:Q95QW4"/>
<dbReference type="Proteomes" id="UP000001940">
    <property type="component" value="Chromosome X"/>
</dbReference>
<dbReference type="Bgee" id="WBGene00000393">
    <property type="expression patterns" value="Expressed in pharyngeal muscle cell (C elegans) and 4 other cell types or tissues"/>
</dbReference>
<dbReference type="ExpressionAtlas" id="Q95QW4">
    <property type="expression patterns" value="baseline and differential"/>
</dbReference>
<dbReference type="GO" id="GO:0016323">
    <property type="term" value="C:basolateral plasma membrane"/>
    <property type="evidence" value="ECO:0000314"/>
    <property type="project" value="WormBase"/>
</dbReference>
<dbReference type="GO" id="GO:0016020">
    <property type="term" value="C:membrane"/>
    <property type="evidence" value="ECO:0000318"/>
    <property type="project" value="GO_Central"/>
</dbReference>
<dbReference type="GO" id="GO:0005886">
    <property type="term" value="C:plasma membrane"/>
    <property type="evidence" value="ECO:0000314"/>
    <property type="project" value="WormBase"/>
</dbReference>
<dbReference type="GO" id="GO:0019901">
    <property type="term" value="F:protein kinase binding"/>
    <property type="evidence" value="ECO:0000353"/>
    <property type="project" value="WormBase"/>
</dbReference>
<dbReference type="GO" id="GO:0005385">
    <property type="term" value="F:zinc ion transmembrane transporter activity"/>
    <property type="evidence" value="ECO:0000318"/>
    <property type="project" value="GO_Central"/>
</dbReference>
<dbReference type="GO" id="GO:0071294">
    <property type="term" value="P:cellular response to zinc ion"/>
    <property type="evidence" value="ECO:0000315"/>
    <property type="project" value="WormBase"/>
</dbReference>
<dbReference type="GO" id="GO:0010312">
    <property type="term" value="P:detoxification of zinc ion"/>
    <property type="evidence" value="ECO:0000318"/>
    <property type="project" value="GO_Central"/>
</dbReference>
<dbReference type="GO" id="GO:0006882">
    <property type="term" value="P:intracellular zinc ion homeostasis"/>
    <property type="evidence" value="ECO:0000318"/>
    <property type="project" value="GO_Central"/>
</dbReference>
<dbReference type="GO" id="GO:0046579">
    <property type="term" value="P:positive regulation of Ras protein signal transduction"/>
    <property type="evidence" value="ECO:0000314"/>
    <property type="project" value="WormBase"/>
</dbReference>
<dbReference type="GO" id="GO:0040026">
    <property type="term" value="P:positive regulation of vulval development"/>
    <property type="evidence" value="ECO:0000316"/>
    <property type="project" value="WormBase"/>
</dbReference>
<dbReference type="GO" id="GO:0071577">
    <property type="term" value="P:zinc ion transmembrane transport"/>
    <property type="evidence" value="ECO:0000318"/>
    <property type="project" value="GO_Central"/>
</dbReference>
<dbReference type="FunFam" id="1.20.1510.10:FF:000045">
    <property type="entry name" value="Cation diffusion facilitator family protein 1"/>
    <property type="match status" value="1"/>
</dbReference>
<dbReference type="FunFam" id="1.20.1510.10:FF:000046">
    <property type="entry name" value="Cation diffusion facilitator family protein 1"/>
    <property type="match status" value="1"/>
</dbReference>
<dbReference type="Gene3D" id="1.20.1510.10">
    <property type="entry name" value="Cation efflux protein transmembrane domain"/>
    <property type="match status" value="2"/>
</dbReference>
<dbReference type="InterPro" id="IPR002524">
    <property type="entry name" value="Cation_efflux"/>
</dbReference>
<dbReference type="InterPro" id="IPR027469">
    <property type="entry name" value="Cation_efflux_TMD_sf"/>
</dbReference>
<dbReference type="NCBIfam" id="TIGR01297">
    <property type="entry name" value="CDF"/>
    <property type="match status" value="1"/>
</dbReference>
<dbReference type="PANTHER" id="PTHR45820">
    <property type="entry name" value="FI23527P1"/>
    <property type="match status" value="1"/>
</dbReference>
<dbReference type="PANTHER" id="PTHR45820:SF4">
    <property type="entry name" value="ZINC TRANSPORTER 63C, ISOFORM F"/>
    <property type="match status" value="1"/>
</dbReference>
<dbReference type="Pfam" id="PF01545">
    <property type="entry name" value="Cation_efflux"/>
    <property type="match status" value="1"/>
</dbReference>
<dbReference type="SUPFAM" id="SSF161111">
    <property type="entry name" value="Cation efflux protein transmembrane domain-like"/>
    <property type="match status" value="1"/>
</dbReference>